<sequence>MLTGSIVALVTPMDKTGEIDFLTLKQLVEFHIKSGTAAIVAVGTSGESATLDVDTHAKVVIKALEFADGRIPIIAGNGANSTSEAVLLSKRFADSGIIAGLNVTPYYNKPTQEGLFQHFKAIAESCDLPQILYNVPGRTSVDMLPETVARLSKIKNIIGIKEATGDLNRLADIKALVADDFALYSGDDATGCDFLLQGGHGVISVTTNIAPVEMAKMCEYALSGQADLAKKIDNQLAPVHKYLFIESNPIPVKWACAEMGLLPSADCRLPLMMLDKKYQPIVRNALIEAKLIS</sequence>
<organism>
    <name type="scientific">Psychromonas ingrahamii (strain DSM 17664 / CCUG 51855 / 37)</name>
    <dbReference type="NCBI Taxonomy" id="357804"/>
    <lineage>
        <taxon>Bacteria</taxon>
        <taxon>Pseudomonadati</taxon>
        <taxon>Pseudomonadota</taxon>
        <taxon>Gammaproteobacteria</taxon>
        <taxon>Alteromonadales</taxon>
        <taxon>Psychromonadaceae</taxon>
        <taxon>Psychromonas</taxon>
    </lineage>
</organism>
<gene>
    <name evidence="1" type="primary">dapA</name>
    <name type="ordered locus">Ping_1860</name>
</gene>
<name>DAPA_PSYIN</name>
<keyword id="KW-0028">Amino-acid biosynthesis</keyword>
<keyword id="KW-0963">Cytoplasm</keyword>
<keyword id="KW-0220">Diaminopimelate biosynthesis</keyword>
<keyword id="KW-0456">Lyase</keyword>
<keyword id="KW-0457">Lysine biosynthesis</keyword>
<keyword id="KW-1185">Reference proteome</keyword>
<keyword id="KW-0704">Schiff base</keyword>
<reference key="1">
    <citation type="journal article" date="2008" name="BMC Genomics">
        <title>Genomics of an extreme psychrophile, Psychromonas ingrahamii.</title>
        <authorList>
            <person name="Riley M."/>
            <person name="Staley J.T."/>
            <person name="Danchin A."/>
            <person name="Wang T.Z."/>
            <person name="Brettin T.S."/>
            <person name="Hauser L.J."/>
            <person name="Land M.L."/>
            <person name="Thompson L.S."/>
        </authorList>
    </citation>
    <scope>NUCLEOTIDE SEQUENCE [LARGE SCALE GENOMIC DNA]</scope>
    <source>
        <strain>DSM 17664 / CCUG 51855 / 37</strain>
    </source>
</reference>
<evidence type="ECO:0000255" key="1">
    <source>
        <dbReference type="HAMAP-Rule" id="MF_00418"/>
    </source>
</evidence>
<evidence type="ECO:0000305" key="2"/>
<protein>
    <recommendedName>
        <fullName evidence="1">4-hydroxy-tetrahydrodipicolinate synthase</fullName>
        <shortName evidence="1">HTPA synthase</shortName>
        <ecNumber evidence="1">4.3.3.7</ecNumber>
    </recommendedName>
</protein>
<feature type="chain" id="PRO_1000050251" description="4-hydroxy-tetrahydrodipicolinate synthase">
    <location>
        <begin position="1"/>
        <end position="293"/>
    </location>
</feature>
<feature type="active site" description="Proton donor/acceptor" evidence="1">
    <location>
        <position position="133"/>
    </location>
</feature>
<feature type="active site" description="Schiff-base intermediate with substrate" evidence="1">
    <location>
        <position position="161"/>
    </location>
</feature>
<feature type="binding site" evidence="1">
    <location>
        <position position="45"/>
    </location>
    <ligand>
        <name>pyruvate</name>
        <dbReference type="ChEBI" id="CHEBI:15361"/>
    </ligand>
</feature>
<feature type="binding site" evidence="1">
    <location>
        <position position="203"/>
    </location>
    <ligand>
        <name>pyruvate</name>
        <dbReference type="ChEBI" id="CHEBI:15361"/>
    </ligand>
</feature>
<feature type="site" description="Part of a proton relay during catalysis" evidence="1">
    <location>
        <position position="44"/>
    </location>
</feature>
<feature type="site" description="Part of a proton relay during catalysis" evidence="1">
    <location>
        <position position="107"/>
    </location>
</feature>
<comment type="function">
    <text evidence="1">Catalyzes the condensation of (S)-aspartate-beta-semialdehyde [(S)-ASA] and pyruvate to 4-hydroxy-tetrahydrodipicolinate (HTPA).</text>
</comment>
<comment type="catalytic activity">
    <reaction evidence="1">
        <text>L-aspartate 4-semialdehyde + pyruvate = (2S,4S)-4-hydroxy-2,3,4,5-tetrahydrodipicolinate + H2O + H(+)</text>
        <dbReference type="Rhea" id="RHEA:34171"/>
        <dbReference type="ChEBI" id="CHEBI:15361"/>
        <dbReference type="ChEBI" id="CHEBI:15377"/>
        <dbReference type="ChEBI" id="CHEBI:15378"/>
        <dbReference type="ChEBI" id="CHEBI:67139"/>
        <dbReference type="ChEBI" id="CHEBI:537519"/>
        <dbReference type="EC" id="4.3.3.7"/>
    </reaction>
</comment>
<comment type="pathway">
    <text evidence="1">Amino-acid biosynthesis; L-lysine biosynthesis via DAP pathway; (S)-tetrahydrodipicolinate from L-aspartate: step 3/4.</text>
</comment>
<comment type="subunit">
    <text evidence="1">Homotetramer; dimer of dimers.</text>
</comment>
<comment type="subcellular location">
    <subcellularLocation>
        <location evidence="1">Cytoplasm</location>
    </subcellularLocation>
</comment>
<comment type="similarity">
    <text evidence="1">Belongs to the DapA family.</text>
</comment>
<comment type="caution">
    <text evidence="2">Was originally thought to be a dihydrodipicolinate synthase (DHDPS), catalyzing the condensation of (S)-aspartate-beta-semialdehyde [(S)-ASA] and pyruvate to dihydrodipicolinate (DHDP). However, it was shown in E.coli that the product of the enzymatic reaction is not dihydrodipicolinate but in fact (4S)-4-hydroxy-2,3,4,5-tetrahydro-(2S)-dipicolinic acid (HTPA), and that the consecutive dehydration reaction leading to DHDP is not spontaneous but catalyzed by DapB.</text>
</comment>
<proteinExistence type="inferred from homology"/>
<dbReference type="EC" id="4.3.3.7" evidence="1"/>
<dbReference type="EMBL" id="CP000510">
    <property type="protein sequence ID" value="ABM03637.1"/>
    <property type="molecule type" value="Genomic_DNA"/>
</dbReference>
<dbReference type="RefSeq" id="WP_011770197.1">
    <property type="nucleotide sequence ID" value="NC_008709.1"/>
</dbReference>
<dbReference type="SMR" id="A1SVX2"/>
<dbReference type="STRING" id="357804.Ping_1860"/>
<dbReference type="KEGG" id="pin:Ping_1860"/>
<dbReference type="eggNOG" id="COG0329">
    <property type="taxonomic scope" value="Bacteria"/>
</dbReference>
<dbReference type="HOGENOM" id="CLU_049343_7_1_6"/>
<dbReference type="OrthoDB" id="9782828at2"/>
<dbReference type="UniPathway" id="UPA00034">
    <property type="reaction ID" value="UER00017"/>
</dbReference>
<dbReference type="Proteomes" id="UP000000639">
    <property type="component" value="Chromosome"/>
</dbReference>
<dbReference type="GO" id="GO:0005829">
    <property type="term" value="C:cytosol"/>
    <property type="evidence" value="ECO:0007669"/>
    <property type="project" value="TreeGrafter"/>
</dbReference>
<dbReference type="GO" id="GO:0008840">
    <property type="term" value="F:4-hydroxy-tetrahydrodipicolinate synthase activity"/>
    <property type="evidence" value="ECO:0007669"/>
    <property type="project" value="UniProtKB-UniRule"/>
</dbReference>
<dbReference type="GO" id="GO:0019877">
    <property type="term" value="P:diaminopimelate biosynthetic process"/>
    <property type="evidence" value="ECO:0007669"/>
    <property type="project" value="UniProtKB-UniRule"/>
</dbReference>
<dbReference type="GO" id="GO:0009089">
    <property type="term" value="P:lysine biosynthetic process via diaminopimelate"/>
    <property type="evidence" value="ECO:0007669"/>
    <property type="project" value="UniProtKB-UniRule"/>
</dbReference>
<dbReference type="CDD" id="cd00950">
    <property type="entry name" value="DHDPS"/>
    <property type="match status" value="1"/>
</dbReference>
<dbReference type="Gene3D" id="3.20.20.70">
    <property type="entry name" value="Aldolase class I"/>
    <property type="match status" value="1"/>
</dbReference>
<dbReference type="HAMAP" id="MF_00418">
    <property type="entry name" value="DapA"/>
    <property type="match status" value="1"/>
</dbReference>
<dbReference type="InterPro" id="IPR013785">
    <property type="entry name" value="Aldolase_TIM"/>
</dbReference>
<dbReference type="InterPro" id="IPR005263">
    <property type="entry name" value="DapA"/>
</dbReference>
<dbReference type="InterPro" id="IPR002220">
    <property type="entry name" value="DapA-like"/>
</dbReference>
<dbReference type="InterPro" id="IPR020625">
    <property type="entry name" value="Schiff_base-form_aldolases_AS"/>
</dbReference>
<dbReference type="NCBIfam" id="TIGR00674">
    <property type="entry name" value="dapA"/>
    <property type="match status" value="1"/>
</dbReference>
<dbReference type="PANTHER" id="PTHR12128:SF66">
    <property type="entry name" value="4-HYDROXY-2-OXOGLUTARATE ALDOLASE, MITOCHONDRIAL"/>
    <property type="match status" value="1"/>
</dbReference>
<dbReference type="PANTHER" id="PTHR12128">
    <property type="entry name" value="DIHYDRODIPICOLINATE SYNTHASE"/>
    <property type="match status" value="1"/>
</dbReference>
<dbReference type="Pfam" id="PF00701">
    <property type="entry name" value="DHDPS"/>
    <property type="match status" value="1"/>
</dbReference>
<dbReference type="PIRSF" id="PIRSF001365">
    <property type="entry name" value="DHDPS"/>
    <property type="match status" value="1"/>
</dbReference>
<dbReference type="PRINTS" id="PR00146">
    <property type="entry name" value="DHPICSNTHASE"/>
</dbReference>
<dbReference type="SMART" id="SM01130">
    <property type="entry name" value="DHDPS"/>
    <property type="match status" value="1"/>
</dbReference>
<dbReference type="SUPFAM" id="SSF51569">
    <property type="entry name" value="Aldolase"/>
    <property type="match status" value="1"/>
</dbReference>
<dbReference type="PROSITE" id="PS00666">
    <property type="entry name" value="DHDPS_2"/>
    <property type="match status" value="1"/>
</dbReference>
<accession>A1SVX2</accession>